<proteinExistence type="inferred from homology"/>
<sequence>MLQLSKSPCMRTPATRSDSYELCRQITAQYAKTFYLGTQLMPLAKRQAIWAIYVWCRRTDELVDGPMASSTTLETLDHWEEQLESIFAGHPIEPVDVALVDTLGRFPLDIQPFRDMIAGQRMDLSRNRYNTFDELNLYCYRVAGTVGLMSLAVMGTAEPDLSVPWNRDQSIYYPKEEAIALGIANQLTNILRDVGEDARRGRIYLPLDDLALFNYTEADLLNGKVDERWRELMRFQIQRARKFYTLAEEGIAALHPDIRWPVWTALMLYRQILDEIERNEYDVFNQRAYVPTWKKMMCLPLAQLRARVL</sequence>
<comment type="function">
    <text>Catalyzes the reaction from prephytoene diphosphate to phytoene.</text>
</comment>
<comment type="catalytic activity">
    <reaction>
        <text>2 (2E,6E,10E)-geranylgeranyl diphosphate = 15-cis-phytoene + 2 diphosphate</text>
        <dbReference type="Rhea" id="RHEA:34475"/>
        <dbReference type="ChEBI" id="CHEBI:27787"/>
        <dbReference type="ChEBI" id="CHEBI:33019"/>
        <dbReference type="ChEBI" id="CHEBI:58756"/>
        <dbReference type="EC" id="2.5.1.32"/>
    </reaction>
</comment>
<comment type="pathway">
    <text>Carotenoid biosynthesis; phytoene biosynthesis; all-trans-phytoene from geranylgeranyl diphosphate: step 1/1.</text>
</comment>
<comment type="similarity">
    <text evidence="1">Belongs to the phytoene/squalene synthase family.</text>
</comment>
<gene>
    <name type="primary">crtB</name>
    <name type="synonym">pys</name>
</gene>
<protein>
    <recommendedName>
        <fullName>Phytoene synthase</fullName>
        <ecNumber>2.5.1.32</ecNumber>
    </recommendedName>
</protein>
<dbReference type="EC" id="2.5.1.32"/>
<dbReference type="EMBL" id="AB001284">
    <property type="protein sequence ID" value="BAA20384.1"/>
    <property type="molecule type" value="Genomic_DNA"/>
</dbReference>
<dbReference type="SMR" id="O07333"/>
<dbReference type="OMA" id="KLYCYRV"/>
<dbReference type="UniPathway" id="UPA00799">
    <property type="reaction ID" value="UER00773"/>
</dbReference>
<dbReference type="GO" id="GO:0004311">
    <property type="term" value="F:geranylgeranyl diphosphate synthase activity"/>
    <property type="evidence" value="ECO:0007669"/>
    <property type="project" value="InterPro"/>
</dbReference>
<dbReference type="GO" id="GO:0051996">
    <property type="term" value="F:squalene synthase [NAD(P)H] activity"/>
    <property type="evidence" value="ECO:0007669"/>
    <property type="project" value="InterPro"/>
</dbReference>
<dbReference type="GO" id="GO:0016117">
    <property type="term" value="P:carotenoid biosynthetic process"/>
    <property type="evidence" value="ECO:0007669"/>
    <property type="project" value="UniProtKB-KW"/>
</dbReference>
<dbReference type="CDD" id="cd00683">
    <property type="entry name" value="Trans_IPPS_HH"/>
    <property type="match status" value="1"/>
</dbReference>
<dbReference type="FunFam" id="1.10.600.10:FF:000004">
    <property type="entry name" value="Phytoene synthase chloroplastic"/>
    <property type="match status" value="1"/>
</dbReference>
<dbReference type="Gene3D" id="1.10.600.10">
    <property type="entry name" value="Farnesyl Diphosphate Synthase"/>
    <property type="match status" value="1"/>
</dbReference>
<dbReference type="InterPro" id="IPR008949">
    <property type="entry name" value="Isoprenoid_synthase_dom_sf"/>
</dbReference>
<dbReference type="InterPro" id="IPR054866">
    <property type="entry name" value="PhytoSynCyanob"/>
</dbReference>
<dbReference type="InterPro" id="IPR002060">
    <property type="entry name" value="Squ/phyt_synthse"/>
</dbReference>
<dbReference type="InterPro" id="IPR019845">
    <property type="entry name" value="Squalene/phytoene_synthase_CS"/>
</dbReference>
<dbReference type="InterPro" id="IPR044843">
    <property type="entry name" value="Trans_IPPS_bact-type"/>
</dbReference>
<dbReference type="InterPro" id="IPR033904">
    <property type="entry name" value="Trans_IPPS_HH"/>
</dbReference>
<dbReference type="NCBIfam" id="NF045686">
    <property type="entry name" value="PhytoSynCyanob"/>
    <property type="match status" value="1"/>
</dbReference>
<dbReference type="PANTHER" id="PTHR31480">
    <property type="entry name" value="BIFUNCTIONAL LYCOPENE CYCLASE/PHYTOENE SYNTHASE"/>
    <property type="match status" value="1"/>
</dbReference>
<dbReference type="Pfam" id="PF00494">
    <property type="entry name" value="SQS_PSY"/>
    <property type="match status" value="1"/>
</dbReference>
<dbReference type="SFLD" id="SFLDG01212">
    <property type="entry name" value="Phytoene_synthase_like"/>
    <property type="match status" value="1"/>
</dbReference>
<dbReference type="SFLD" id="SFLDG01018">
    <property type="entry name" value="Squalene/Phytoene_Synthase_Lik"/>
    <property type="match status" value="1"/>
</dbReference>
<dbReference type="SUPFAM" id="SSF48576">
    <property type="entry name" value="Terpenoid synthases"/>
    <property type="match status" value="1"/>
</dbReference>
<dbReference type="PROSITE" id="PS01044">
    <property type="entry name" value="SQUALEN_PHYTOEN_SYN_1"/>
    <property type="match status" value="1"/>
</dbReference>
<dbReference type="PROSITE" id="PS01045">
    <property type="entry name" value="SQUALEN_PHYTOEN_SYN_2"/>
    <property type="match status" value="1"/>
</dbReference>
<feature type="chain" id="PRO_0000067436" description="Phytoene synthase">
    <location>
        <begin position="1"/>
        <end position="309"/>
    </location>
</feature>
<accession>O07333</accession>
<name>CRTY_ARTPT</name>
<reference key="1">
    <citation type="submission" date="1997-02" db="EMBL/GenBank/DDBJ databases">
        <authorList>
            <person name="Kawata Y."/>
            <person name="Yano S."/>
            <person name="Kojima H."/>
        </authorList>
    </citation>
    <scope>NUCLEOTIDE SEQUENCE [GENOMIC DNA]</scope>
    <source>
        <strain>IAM M-135</strain>
    </source>
</reference>
<evidence type="ECO:0000305" key="1"/>
<organism>
    <name type="scientific">Arthrospira platensis</name>
    <name type="common">Spirulina platensis</name>
    <dbReference type="NCBI Taxonomy" id="118562"/>
    <lineage>
        <taxon>Bacteria</taxon>
        <taxon>Bacillati</taxon>
        <taxon>Cyanobacteriota</taxon>
        <taxon>Cyanophyceae</taxon>
        <taxon>Oscillatoriophycideae</taxon>
        <taxon>Oscillatoriales</taxon>
        <taxon>Microcoleaceae</taxon>
        <taxon>Arthrospira</taxon>
    </lineage>
</organism>
<keyword id="KW-0125">Carotenoid biosynthesis</keyword>
<keyword id="KW-0511">Multifunctional enzyme</keyword>
<keyword id="KW-0808">Transferase</keyword>